<proteinExistence type="evidence at protein level"/>
<comment type="function">
    <text evidence="1 3">Beta-1,4 N-acetylgalactosaminyltransferase involved in the biosynthesis of T-lymphocyte CT glycan antigen carried by CD45 family of protein phosphatases. Catalyzes the transfer of N-acetylgalactosamine (GalNAc) group in a beta-1,4-linkage from UDP-GalNAc to the galactose residue of NeuAcalpha2-&gt;3Gal-R to form GalNAcbeta1-&gt;4(NeuAcalpha2-&gt;3)Gal-R glycan epitope.</text>
</comment>
<comment type="catalytic activity">
    <reaction evidence="3">
        <text>an N-acetyl-alpha-neuraminyl-(2-&gt;3)-beta-D-galactosyl derivative + UDP-N-acetyl-alpha-D-galactosamine = an N-acetyl-beta-D-galactosaminyl-(1-&gt;4)-[N-acetyl-alpha-neuraminyl-(2-&gt;3)]-beta-D-galactosyl derivative + UDP + H(+)</text>
        <dbReference type="Rhea" id="RHEA:81947"/>
        <dbReference type="ChEBI" id="CHEBI:15378"/>
        <dbReference type="ChEBI" id="CHEBI:58223"/>
        <dbReference type="ChEBI" id="CHEBI:67138"/>
        <dbReference type="ChEBI" id="CHEBI:140308"/>
        <dbReference type="ChEBI" id="CHEBI:232045"/>
    </reaction>
    <physiologicalReaction direction="left-to-right" evidence="3">
        <dbReference type="Rhea" id="RHEA:81948"/>
    </physiologicalReaction>
</comment>
<comment type="catalytic activity">
    <reaction evidence="1">
        <text>a 3-O-{alpha-Neu5Ac-(2-&gt;3)-beta-D-Gal-(1-&gt;3)-[alpha-Neu5Ac-(2-&gt;6)]-alpha-D-GalNAc}-L-seryl-[protein] + UDP-N-acetyl-alpha-D-galactosamine = a 3-O-{[alpha-Neu5Ac-(2-&gt;3)]-beta-D-GalNAc-(1-&gt;4)-beta-D-Gal-(1-&gt;3)-[alpha-Neu5Ac-(2-&gt;6)]-alpha-D-GalNAc}-L-seryl-[protein] + UDP + H(+)</text>
        <dbReference type="Rhea" id="RHEA:81955"/>
        <dbReference type="Rhea" id="RHEA-COMP:16761"/>
        <dbReference type="Rhea" id="RHEA-COMP:19757"/>
        <dbReference type="ChEBI" id="CHEBI:15378"/>
        <dbReference type="ChEBI" id="CHEBI:58223"/>
        <dbReference type="ChEBI" id="CHEBI:67138"/>
        <dbReference type="ChEBI" id="CHEBI:156397"/>
        <dbReference type="ChEBI" id="CHEBI:232003"/>
    </reaction>
    <physiologicalReaction direction="left-to-right" evidence="1">
        <dbReference type="Rhea" id="RHEA:81956"/>
    </physiologicalReaction>
</comment>
<comment type="catalytic activity">
    <reaction evidence="1">
        <text>a 3-O-{alpha-Neu5Ac-(2-&gt;3)-beta-D-Gal-(1-&gt;3)-[alpha-Neu5Ac-(2-&gt;6)]-alpha-D-GalNAc}-L-threonyl-[protein] + UDP-N-acetyl-alpha-D-galactosamine = a 3-O-{[alpha-Neu5Ac-(2-&gt;3)]-beta-D-GalNAc-(1-&gt;4)-beta-D-Gal-(1-&gt;3)-[alpha-Neu5Ac-(2-&gt;6)]-alpha-D-GalNAc}-L-threonyl-[protein] + UDP + H(+)</text>
        <dbReference type="Rhea" id="RHEA:81971"/>
        <dbReference type="Rhea" id="RHEA-COMP:16763"/>
        <dbReference type="Rhea" id="RHEA-COMP:19778"/>
        <dbReference type="ChEBI" id="CHEBI:15378"/>
        <dbReference type="ChEBI" id="CHEBI:58223"/>
        <dbReference type="ChEBI" id="CHEBI:67138"/>
        <dbReference type="ChEBI" id="CHEBI:156398"/>
        <dbReference type="ChEBI" id="CHEBI:232035"/>
    </reaction>
    <physiologicalReaction direction="left-to-right" evidence="1">
        <dbReference type="Rhea" id="RHEA:81972"/>
    </physiologicalReaction>
</comment>
<comment type="catalytic activity">
    <reaction evidence="1">
        <text>a neolactoside IV(3)-alpha-NeuAc-nLc4Cer + UDP-N-acetyl-alpha-D-galactosamine = a neolactoside IV(4)-GalNAc,IV(3)-alpha-NeuAc-nLc4Cer + UDP + H(+)</text>
        <dbReference type="Rhea" id="RHEA:82011"/>
        <dbReference type="ChEBI" id="CHEBI:15378"/>
        <dbReference type="ChEBI" id="CHEBI:58223"/>
        <dbReference type="ChEBI" id="CHEBI:67138"/>
        <dbReference type="ChEBI" id="CHEBI:90390"/>
        <dbReference type="ChEBI" id="CHEBI:145079"/>
    </reaction>
    <physiologicalReaction direction="left-to-right" evidence="1">
        <dbReference type="Rhea" id="RHEA:82012"/>
    </physiologicalReaction>
</comment>
<comment type="pathway">
    <text evidence="1">Protein modification; protein glycosylation.</text>
</comment>
<comment type="pathway">
    <text evidence="1">Glycolipid biosynthesis.</text>
</comment>
<comment type="subunit">
    <text evidence="1">Homodimer; disulfide-linked.</text>
</comment>
<comment type="subcellular location">
    <subcellularLocation>
        <location evidence="1">Golgi apparatus</location>
        <location evidence="1">trans-Golgi network membrane</location>
        <topology evidence="2">Single-pass type II membrane protein</topology>
    </subcellularLocation>
</comment>
<comment type="similarity">
    <text evidence="4">Belongs to the glycosyltransferase 2 family.</text>
</comment>
<sequence length="510" mass="58317">MTSSVSFASFRFPWLLKTFVLMVGLATVAFMVRKVSLTTDFSTFKPKFPEPARVDPVLKLLPEEHLRKLFTYSDIWLFPKNQCDCNSGKLRMKYKFQDAYNQKDLPAVNARRQAEFEHFQRREGLPRPPPLLAPPNLPFGYPVHGVEVMPLHTILIPGLQYEGPDAPVYEVILKASLGTLNTLADVPDDEVQGRGQRQLTISTRHRKVLNFILQHVTYTSTEYYLHKVDTVSMEYESSVAKFPVTIKQQTVPKLYDPGPERKIRNLVTIATKTFLRPHKLKILLQSIRKYYPDITVIVADDSKEPLEINDDYVEYYTMPFGKGWFAGRNLAISQVTTKYVLWVDDDFLFSDKTKIEVLVDVLEKTELDVVGGSVQGNTYQFRLLYEQTKNGSCLHQRWGSFQALDGFPGCTLTSGVVNFFLAHTEQLRRVGFDPILQRVAHGEFFIDGLGRLLVGSCPGVIINHQVRTPPKDPKLAALEKTYDKYRANTNSVIQFKVALQYFKNHLYCST</sequence>
<feature type="chain" id="PRO_0000059104" description="Beta-1,4 N-acetylgalactosaminyltransferase 2">
    <location>
        <begin position="1"/>
        <end position="510"/>
    </location>
</feature>
<feature type="topological domain" description="Cytoplasmic" evidence="2">
    <location>
        <begin position="1"/>
        <end position="15"/>
    </location>
</feature>
<feature type="transmembrane region" description="Helical; Signal-anchor for type II membrane protein" evidence="2">
    <location>
        <begin position="16"/>
        <end position="32"/>
    </location>
</feature>
<feature type="topological domain" description="Lumenal" evidence="2">
    <location>
        <begin position="33"/>
        <end position="510"/>
    </location>
</feature>
<feature type="glycosylation site" description="N-linked (GlcNAc...) asparagine" evidence="2">
    <location>
        <position position="390"/>
    </location>
</feature>
<organism>
    <name type="scientific">Mus musculus</name>
    <name type="common">Mouse</name>
    <dbReference type="NCBI Taxonomy" id="10090"/>
    <lineage>
        <taxon>Eukaryota</taxon>
        <taxon>Metazoa</taxon>
        <taxon>Chordata</taxon>
        <taxon>Craniata</taxon>
        <taxon>Vertebrata</taxon>
        <taxon>Euteleostomi</taxon>
        <taxon>Mammalia</taxon>
        <taxon>Eutheria</taxon>
        <taxon>Euarchontoglires</taxon>
        <taxon>Glires</taxon>
        <taxon>Rodentia</taxon>
        <taxon>Myomorpha</taxon>
        <taxon>Muroidea</taxon>
        <taxon>Muridae</taxon>
        <taxon>Murinae</taxon>
        <taxon>Mus</taxon>
        <taxon>Mus</taxon>
    </lineage>
</organism>
<keyword id="KW-1015">Disulfide bond</keyword>
<keyword id="KW-0325">Glycoprotein</keyword>
<keyword id="KW-0328">Glycosyltransferase</keyword>
<keyword id="KW-0333">Golgi apparatus</keyword>
<keyword id="KW-0472">Membrane</keyword>
<keyword id="KW-1185">Reference proteome</keyword>
<keyword id="KW-0735">Signal-anchor</keyword>
<keyword id="KW-0808">Transferase</keyword>
<keyword id="KW-0812">Transmembrane</keyword>
<keyword id="KW-1133">Transmembrane helix</keyword>
<name>B4GN2_MOUSE</name>
<dbReference type="EC" id="2.4.1.-" evidence="3"/>
<dbReference type="EMBL" id="L30104">
    <property type="protein sequence ID" value="AAA39802.1"/>
    <property type="molecule type" value="mRNA"/>
</dbReference>
<dbReference type="CCDS" id="CCDS25285.1"/>
<dbReference type="PIR" id="A53802">
    <property type="entry name" value="A53802"/>
</dbReference>
<dbReference type="RefSeq" id="NP_032107.1">
    <property type="nucleotide sequence ID" value="NM_008081.3"/>
</dbReference>
<dbReference type="SMR" id="Q09199"/>
<dbReference type="FunCoup" id="Q09199">
    <property type="interactions" value="28"/>
</dbReference>
<dbReference type="STRING" id="10090.ENSMUSP00000037239"/>
<dbReference type="CAZy" id="GT12">
    <property type="family name" value="Glycosyltransferase Family 12"/>
</dbReference>
<dbReference type="GlyCosmos" id="Q09199">
    <property type="glycosylation" value="1 site, No reported glycans"/>
</dbReference>
<dbReference type="GlyGen" id="Q09199">
    <property type="glycosylation" value="1 site"/>
</dbReference>
<dbReference type="iPTMnet" id="Q09199"/>
<dbReference type="PhosphoSitePlus" id="Q09199"/>
<dbReference type="SwissPalm" id="Q09199"/>
<dbReference type="PaxDb" id="10090-ENSMUSP00000037239"/>
<dbReference type="ProteomicsDB" id="277154"/>
<dbReference type="Antibodypedia" id="2589">
    <property type="antibodies" value="75 antibodies from 21 providers"/>
</dbReference>
<dbReference type="DNASU" id="14422"/>
<dbReference type="Ensembl" id="ENSMUST00000038343.7">
    <property type="protein sequence ID" value="ENSMUSP00000037239.7"/>
    <property type="gene ID" value="ENSMUSG00000013418.9"/>
</dbReference>
<dbReference type="GeneID" id="14422"/>
<dbReference type="KEGG" id="mmu:14422"/>
<dbReference type="UCSC" id="uc007lax.1">
    <property type="organism name" value="mouse"/>
</dbReference>
<dbReference type="AGR" id="MGI:1342058"/>
<dbReference type="CTD" id="124872"/>
<dbReference type="MGI" id="MGI:1342058">
    <property type="gene designation" value="B4galnt2"/>
</dbReference>
<dbReference type="VEuPathDB" id="HostDB:ENSMUSG00000013418"/>
<dbReference type="eggNOG" id="ENOG502QTK7">
    <property type="taxonomic scope" value="Eukaryota"/>
</dbReference>
<dbReference type="GeneTree" id="ENSGT00390000006679"/>
<dbReference type="HOGENOM" id="CLU_036051_1_0_1"/>
<dbReference type="InParanoid" id="Q09199"/>
<dbReference type="OMA" id="GDCIHRR"/>
<dbReference type="OrthoDB" id="2139606at2759"/>
<dbReference type="PhylomeDB" id="Q09199"/>
<dbReference type="TreeFam" id="TF332297"/>
<dbReference type="Reactome" id="R-MMU-446203">
    <property type="pathway name" value="Asparagine N-linked glycosylation"/>
</dbReference>
<dbReference type="Reactome" id="R-MMU-9037629">
    <property type="pathway name" value="Lewis blood group biosynthesis"/>
</dbReference>
<dbReference type="UniPathway" id="UPA00378"/>
<dbReference type="BioGRID-ORCS" id="14422">
    <property type="hits" value="3 hits in 79 CRISPR screens"/>
</dbReference>
<dbReference type="PRO" id="PR:Q09199"/>
<dbReference type="Proteomes" id="UP000000589">
    <property type="component" value="Chromosome 11"/>
</dbReference>
<dbReference type="RNAct" id="Q09199">
    <property type="molecule type" value="protein"/>
</dbReference>
<dbReference type="Bgee" id="ENSMUSG00000013418">
    <property type="expression patterns" value="Expressed in duodenum and 56 other cell types or tissues"/>
</dbReference>
<dbReference type="ExpressionAtlas" id="Q09199">
    <property type="expression patterns" value="baseline and differential"/>
</dbReference>
<dbReference type="GO" id="GO:0000139">
    <property type="term" value="C:Golgi membrane"/>
    <property type="evidence" value="ECO:0007669"/>
    <property type="project" value="InterPro"/>
</dbReference>
<dbReference type="GO" id="GO:0008376">
    <property type="term" value="F:acetylgalactosaminyltransferase activity"/>
    <property type="evidence" value="ECO:0000250"/>
    <property type="project" value="UniProtKB"/>
</dbReference>
<dbReference type="GO" id="GO:0030259">
    <property type="term" value="P:lipid glycosylation"/>
    <property type="evidence" value="ECO:0007669"/>
    <property type="project" value="InterPro"/>
</dbReference>
<dbReference type="GO" id="GO:0022408">
    <property type="term" value="P:negative regulation of cell-cell adhesion"/>
    <property type="evidence" value="ECO:0000250"/>
    <property type="project" value="UniProtKB"/>
</dbReference>
<dbReference type="GO" id="GO:0006486">
    <property type="term" value="P:protein glycosylation"/>
    <property type="evidence" value="ECO:0000315"/>
    <property type="project" value="MGI"/>
</dbReference>
<dbReference type="GO" id="GO:0017038">
    <property type="term" value="P:protein import"/>
    <property type="evidence" value="ECO:0000314"/>
    <property type="project" value="MGI"/>
</dbReference>
<dbReference type="GO" id="GO:0098528">
    <property type="term" value="P:skeletal muscle fiber differentiation"/>
    <property type="evidence" value="ECO:0000314"/>
    <property type="project" value="MGI"/>
</dbReference>
<dbReference type="GO" id="GO:0043403">
    <property type="term" value="P:skeletal muscle tissue regeneration"/>
    <property type="evidence" value="ECO:0000314"/>
    <property type="project" value="MGI"/>
</dbReference>
<dbReference type="GO" id="GO:0019276">
    <property type="term" value="P:UDP-N-acetylgalactosamine metabolic process"/>
    <property type="evidence" value="ECO:0000250"/>
    <property type="project" value="UniProtKB"/>
</dbReference>
<dbReference type="GO" id="GO:0006047">
    <property type="term" value="P:UDP-N-acetylglucosamine metabolic process"/>
    <property type="evidence" value="ECO:0000315"/>
    <property type="project" value="MGI"/>
</dbReference>
<dbReference type="CDD" id="cd00761">
    <property type="entry name" value="Glyco_tranf_GTA_type"/>
    <property type="match status" value="1"/>
</dbReference>
<dbReference type="FunFam" id="3.90.550.10:FF:000076">
    <property type="entry name" value="Beta-1,4 N-acetylgalactosaminyltransferase"/>
    <property type="match status" value="1"/>
</dbReference>
<dbReference type="Gene3D" id="3.90.550.10">
    <property type="entry name" value="Spore Coat Polysaccharide Biosynthesis Protein SpsA, Chain A"/>
    <property type="match status" value="1"/>
</dbReference>
<dbReference type="InterPro" id="IPR001173">
    <property type="entry name" value="Glyco_trans_2-like"/>
</dbReference>
<dbReference type="InterPro" id="IPR011143">
    <property type="entry name" value="GM2_synthase"/>
</dbReference>
<dbReference type="InterPro" id="IPR029044">
    <property type="entry name" value="Nucleotide-diphossugar_trans"/>
</dbReference>
<dbReference type="PANTHER" id="PTHR15046:SF2">
    <property type="entry name" value="BETA-1,4 N-ACETYLGALACTOSAMINYLTRANSFERASE 2"/>
    <property type="match status" value="1"/>
</dbReference>
<dbReference type="PANTHER" id="PTHR15046">
    <property type="entry name" value="GLYCO_TRANS_2-LIKE DOMAIN-CONTAINING PROTEIN"/>
    <property type="match status" value="1"/>
</dbReference>
<dbReference type="Pfam" id="PF00535">
    <property type="entry name" value="Glycos_transf_2"/>
    <property type="match status" value="1"/>
</dbReference>
<dbReference type="PIRSF" id="PIRSF000474">
    <property type="entry name" value="GM2_GD2_synthase"/>
    <property type="match status" value="1"/>
</dbReference>
<dbReference type="SUPFAM" id="SSF53448">
    <property type="entry name" value="Nucleotide-diphospho-sugar transferases"/>
    <property type="match status" value="1"/>
</dbReference>
<gene>
    <name evidence="5" type="primary">B4galnt2</name>
    <name type="synonym">Galgt2</name>
    <name type="synonym">Ggm3</name>
</gene>
<reference key="1">
    <citation type="journal article" date="1994" name="J. Biol. Chem.">
        <title>Molecular cloning of a murine N-acetylgalactosamine transferase cDNA that determines expression of the T lymphocyte-specific CT oligosaccharide differentiation antigen.</title>
        <authorList>
            <person name="Smith P.L."/>
            <person name="Lowe J.B."/>
        </authorList>
    </citation>
    <scope>NUCLEOTIDE SEQUENCE [MRNA]</scope>
    <scope>FUNCTION</scope>
    <scope>CATALYTIC ACTIVITY</scope>
</reference>
<accession>Q09199</accession>
<protein>
    <recommendedName>
        <fullName>Beta-1,4 N-acetylgalactosaminyltransferase 2</fullName>
        <ecNumber evidence="3">2.4.1.-</ecNumber>
    </recommendedName>
</protein>
<evidence type="ECO:0000250" key="1">
    <source>
        <dbReference type="UniProtKB" id="Q8NHY0"/>
    </source>
</evidence>
<evidence type="ECO:0000255" key="2"/>
<evidence type="ECO:0000269" key="3">
    <source>
    </source>
</evidence>
<evidence type="ECO:0000305" key="4"/>
<evidence type="ECO:0000312" key="5">
    <source>
        <dbReference type="MGI" id="MGI:1342058"/>
    </source>
</evidence>